<sequence>DGYIRRRDGCKVSCLFGNEGCDKECKAYGGSYGYCWTWGLACWCEGLPDDKTWKSETNTCG</sequence>
<evidence type="ECO:0000255" key="1">
    <source>
        <dbReference type="PROSITE-ProRule" id="PRU01210"/>
    </source>
</evidence>
<evidence type="ECO:0000269" key="2">
    <source>
    </source>
</evidence>
<evidence type="ECO:0000305" key="3"/>
<dbReference type="SMR" id="P80962"/>
<dbReference type="GO" id="GO:0005576">
    <property type="term" value="C:extracellular region"/>
    <property type="evidence" value="ECO:0007669"/>
    <property type="project" value="UniProtKB-SubCell"/>
</dbReference>
<dbReference type="GO" id="GO:0019871">
    <property type="term" value="F:sodium channel inhibitor activity"/>
    <property type="evidence" value="ECO:0007669"/>
    <property type="project" value="InterPro"/>
</dbReference>
<dbReference type="GO" id="GO:0090729">
    <property type="term" value="F:toxin activity"/>
    <property type="evidence" value="ECO:0007669"/>
    <property type="project" value="UniProtKB-KW"/>
</dbReference>
<dbReference type="GO" id="GO:0006952">
    <property type="term" value="P:defense response"/>
    <property type="evidence" value="ECO:0007669"/>
    <property type="project" value="InterPro"/>
</dbReference>
<dbReference type="CDD" id="cd23106">
    <property type="entry name" value="neurotoxins_LC_scorpion"/>
    <property type="match status" value="1"/>
</dbReference>
<dbReference type="FunFam" id="3.30.30.10:FF:000002">
    <property type="entry name" value="Alpha-like toxin BmK-M1"/>
    <property type="match status" value="1"/>
</dbReference>
<dbReference type="Gene3D" id="3.30.30.10">
    <property type="entry name" value="Knottin, scorpion toxin-like"/>
    <property type="match status" value="1"/>
</dbReference>
<dbReference type="InterPro" id="IPR044062">
    <property type="entry name" value="LCN-type_CS_alpha_beta_dom"/>
</dbReference>
<dbReference type="InterPro" id="IPR003614">
    <property type="entry name" value="Scorpion_toxin-like"/>
</dbReference>
<dbReference type="InterPro" id="IPR036574">
    <property type="entry name" value="Scorpion_toxin-like_sf"/>
</dbReference>
<dbReference type="InterPro" id="IPR018218">
    <property type="entry name" value="Scorpion_toxinL"/>
</dbReference>
<dbReference type="InterPro" id="IPR002061">
    <property type="entry name" value="Scorpion_toxinL/defensin"/>
</dbReference>
<dbReference type="Pfam" id="PF00537">
    <property type="entry name" value="Toxin_3"/>
    <property type="match status" value="1"/>
</dbReference>
<dbReference type="PRINTS" id="PR00285">
    <property type="entry name" value="SCORPNTOXIN"/>
</dbReference>
<dbReference type="SMART" id="SM00505">
    <property type="entry name" value="Knot1"/>
    <property type="match status" value="1"/>
</dbReference>
<dbReference type="SUPFAM" id="SSF57095">
    <property type="entry name" value="Scorpion toxin-like"/>
    <property type="match status" value="1"/>
</dbReference>
<dbReference type="PROSITE" id="PS51863">
    <property type="entry name" value="LCN_CSAB"/>
    <property type="match status" value="1"/>
</dbReference>
<comment type="function">
    <text evidence="2">Depressant insect beta-toxins cause a transient contraction paralysis followed by a slow flaccid paralysis. They bind voltage-independently at site-4 of sodium channels (Nav) and shift the voltage of activation toward more negative potentials thereby affecting sodium channel activation and promoting spontaneous and repetitive firing. This toxin is active only on insects.</text>
</comment>
<comment type="subcellular location">
    <subcellularLocation>
        <location>Secreted</location>
    </subcellularLocation>
</comment>
<comment type="tissue specificity">
    <text>Expressed by the venom gland.</text>
</comment>
<comment type="domain">
    <text evidence="3">Has the structural arrangement of an alpha-helix connected to antiparallel beta-sheets by disulfide bonds (CS-alpha/beta).</text>
</comment>
<comment type="similarity">
    <text evidence="3">Belongs to the long (4 C-C) scorpion toxin superfamily. Sodium channel inhibitor family. Beta subfamily.</text>
</comment>
<accession>P80962</accession>
<feature type="chain" id="PRO_0000066712" description="Beta-insect depressant toxin BaIT2">
    <location>
        <begin position="1"/>
        <end position="61"/>
    </location>
</feature>
<feature type="domain" description="LCN-type CS-alpha/beta" evidence="1">
    <location>
        <begin position="1"/>
        <end position="61"/>
    </location>
</feature>
<feature type="disulfide bond" evidence="1">
    <location>
        <begin position="10"/>
        <end position="60"/>
    </location>
</feature>
<feature type="disulfide bond" evidence="1">
    <location>
        <begin position="14"/>
        <end position="35"/>
    </location>
</feature>
<feature type="disulfide bond" evidence="1">
    <location>
        <begin position="21"/>
        <end position="42"/>
    </location>
</feature>
<feature type="disulfide bond" evidence="1">
    <location>
        <begin position="25"/>
        <end position="44"/>
    </location>
</feature>
<proteinExistence type="evidence at protein level"/>
<name>SIX2_BUTAR</name>
<keyword id="KW-0903">Direct protein sequencing</keyword>
<keyword id="KW-1015">Disulfide bond</keyword>
<keyword id="KW-0872">Ion channel impairing toxin</keyword>
<keyword id="KW-0528">Neurotoxin</keyword>
<keyword id="KW-0964">Secreted</keyword>
<keyword id="KW-0800">Toxin</keyword>
<keyword id="KW-0738">Voltage-gated sodium channel impairing toxin</keyword>
<reference key="1">
    <citation type="journal article" date="1997" name="Eur. J. Biochem.">
        <title>Biochemical and pharmacological characterization of a depressant insect toxin from the venom of the scorpion Buthacus arenicola.</title>
        <authorList>
            <person name="Cestele S."/>
            <person name="Kopeyan C."/>
            <person name="Oughideni R."/>
            <person name="Mansuelle P."/>
            <person name="Granier C."/>
            <person name="Rochat H."/>
        </authorList>
    </citation>
    <scope>PROTEIN SEQUENCE</scope>
    <scope>FUNCTION</scope>
    <source>
        <tissue>Venom</tissue>
    </source>
</reference>
<organism>
    <name type="scientific">Buthacus arenicola</name>
    <name type="common">North African scorpion</name>
    <dbReference type="NCBI Taxonomy" id="70335"/>
    <lineage>
        <taxon>Eukaryota</taxon>
        <taxon>Metazoa</taxon>
        <taxon>Ecdysozoa</taxon>
        <taxon>Arthropoda</taxon>
        <taxon>Chelicerata</taxon>
        <taxon>Arachnida</taxon>
        <taxon>Scorpiones</taxon>
        <taxon>Buthida</taxon>
        <taxon>Buthoidea</taxon>
        <taxon>Buthidae</taxon>
        <taxon>Buthacus</taxon>
    </lineage>
</organism>
<protein>
    <recommendedName>
        <fullName>Beta-insect depressant toxin BaIT2</fullName>
        <shortName>BaIT2</shortName>
        <shortName>BarIT2</shortName>
        <shortName>Toxin 2</shortName>
    </recommendedName>
</protein>